<name>RHRP_STRCO</name>
<comment type="function">
    <text evidence="1">Essential for maintaining intracellular redox homeostasis.</text>
</comment>
<comment type="similarity">
    <text evidence="3">Belongs to the Rv0495c family.</text>
</comment>
<evidence type="ECO:0000250" key="1">
    <source>
        <dbReference type="UniProtKB" id="P9WKU5"/>
    </source>
</evidence>
<evidence type="ECO:0000256" key="2">
    <source>
        <dbReference type="SAM" id="MobiDB-lite"/>
    </source>
</evidence>
<evidence type="ECO:0000305" key="3"/>
<proteinExistence type="inferred from homology"/>
<sequence>MPKTKKAKDEKSAKKDKKHIAGDEKGLDFARAWVEFPDPADDEQVFRCDLTWLTSRWNCIFGSGCQGIQAGRADDGCCSLGAHFSDEDDEKRVAGHVARLTPDIWQHHAEGTRNGWTSEDDEGSRQTRPFQGSCIFQNRPGFAGGAGCSLHILALKEGREPLETKPDVCWQLPVRRTYEWIDRPDDTRVLQVSIGEYDRRGWGPGGHDLHWWCTSATSAHGAGDPVYVSYRPELVELMGKAGYDRLVELCEERLASQLPLLAPHPADPAGR</sequence>
<feature type="chain" id="PRO_0000103698" description="Probable redox regulatory protein SCO3349">
    <location>
        <begin position="1"/>
        <end position="271"/>
    </location>
</feature>
<feature type="region of interest" description="Disordered" evidence="2">
    <location>
        <begin position="1"/>
        <end position="21"/>
    </location>
</feature>
<feature type="region of interest" description="Disordered" evidence="2">
    <location>
        <begin position="109"/>
        <end position="130"/>
    </location>
</feature>
<feature type="compositionally biased region" description="Basic and acidic residues" evidence="2">
    <location>
        <begin position="7"/>
        <end position="21"/>
    </location>
</feature>
<organism>
    <name type="scientific">Streptomyces coelicolor (strain ATCC BAA-471 / A3(2) / M145)</name>
    <dbReference type="NCBI Taxonomy" id="100226"/>
    <lineage>
        <taxon>Bacteria</taxon>
        <taxon>Bacillati</taxon>
        <taxon>Actinomycetota</taxon>
        <taxon>Actinomycetes</taxon>
        <taxon>Kitasatosporales</taxon>
        <taxon>Streptomycetaceae</taxon>
        <taxon>Streptomyces</taxon>
        <taxon>Streptomyces albidoflavus group</taxon>
    </lineage>
</organism>
<keyword id="KW-1185">Reference proteome</keyword>
<gene>
    <name type="ordered locus">SCO3349</name>
    <name type="ORF">SCE7.16</name>
</gene>
<dbReference type="EMBL" id="AL939116">
    <property type="protein sequence ID" value="CAB42675.1"/>
    <property type="molecule type" value="Genomic_DNA"/>
</dbReference>
<dbReference type="PIR" id="T36298">
    <property type="entry name" value="T36298"/>
</dbReference>
<dbReference type="RefSeq" id="NP_627558.1">
    <property type="nucleotide sequence ID" value="NC_003888.3"/>
</dbReference>
<dbReference type="RefSeq" id="WP_003975485.1">
    <property type="nucleotide sequence ID" value="NZ_VNID01000023.1"/>
</dbReference>
<dbReference type="STRING" id="100226.gene:17760971"/>
<dbReference type="PaxDb" id="100226-SCO3349"/>
<dbReference type="KEGG" id="sco:SCO3349"/>
<dbReference type="PATRIC" id="fig|100226.15.peg.3411"/>
<dbReference type="eggNOG" id="ENOG502Z8QX">
    <property type="taxonomic scope" value="Bacteria"/>
</dbReference>
<dbReference type="HOGENOM" id="CLU_071594_0_0_11"/>
<dbReference type="InParanoid" id="Q9X8H2"/>
<dbReference type="OrthoDB" id="3394274at2"/>
<dbReference type="PhylomeDB" id="Q9X8H2"/>
<dbReference type="Proteomes" id="UP000001973">
    <property type="component" value="Chromosome"/>
</dbReference>
<accession>Q9X8H2</accession>
<protein>
    <recommendedName>
        <fullName evidence="1">Probable redox regulatory protein SCO3349</fullName>
    </recommendedName>
</protein>
<reference key="1">
    <citation type="journal article" date="2002" name="Nature">
        <title>Complete genome sequence of the model actinomycete Streptomyces coelicolor A3(2).</title>
        <authorList>
            <person name="Bentley S.D."/>
            <person name="Chater K.F."/>
            <person name="Cerdeno-Tarraga A.-M."/>
            <person name="Challis G.L."/>
            <person name="Thomson N.R."/>
            <person name="James K.D."/>
            <person name="Harris D.E."/>
            <person name="Quail M.A."/>
            <person name="Kieser H."/>
            <person name="Harper D."/>
            <person name="Bateman A."/>
            <person name="Brown S."/>
            <person name="Chandra G."/>
            <person name="Chen C.W."/>
            <person name="Collins M."/>
            <person name="Cronin A."/>
            <person name="Fraser A."/>
            <person name="Goble A."/>
            <person name="Hidalgo J."/>
            <person name="Hornsby T."/>
            <person name="Howarth S."/>
            <person name="Huang C.-H."/>
            <person name="Kieser T."/>
            <person name="Larke L."/>
            <person name="Murphy L.D."/>
            <person name="Oliver K."/>
            <person name="O'Neil S."/>
            <person name="Rabbinowitsch E."/>
            <person name="Rajandream M.A."/>
            <person name="Rutherford K.M."/>
            <person name="Rutter S."/>
            <person name="Seeger K."/>
            <person name="Saunders D."/>
            <person name="Sharp S."/>
            <person name="Squares R."/>
            <person name="Squares S."/>
            <person name="Taylor K."/>
            <person name="Warren T."/>
            <person name="Wietzorrek A."/>
            <person name="Woodward J.R."/>
            <person name="Barrell B.G."/>
            <person name="Parkhill J."/>
            <person name="Hopwood D.A."/>
        </authorList>
    </citation>
    <scope>NUCLEOTIDE SEQUENCE [LARGE SCALE GENOMIC DNA]</scope>
    <source>
        <strain>ATCC BAA-471 / A3(2) / M145</strain>
    </source>
</reference>